<sequence length="137" mass="15113">MEKTLSIIKPDAVKKGVIGKILDRFESNGLRIAAMKKVQLSKEQAENFYAVHKERPFFKDLVEFMISGPVVVSVLEGEGAVLKNRDLMGATNPKEAKAGTIRADFAESIDANAVHGSDSLENAKIEIDFFFKPNEIC</sequence>
<evidence type="ECO:0000255" key="1">
    <source>
        <dbReference type="HAMAP-Rule" id="MF_00451"/>
    </source>
</evidence>
<accession>A8FKC1</accession>
<organism>
    <name type="scientific">Campylobacter jejuni subsp. jejuni serotype O:6 (strain 81116 / NCTC 11828)</name>
    <dbReference type="NCBI Taxonomy" id="407148"/>
    <lineage>
        <taxon>Bacteria</taxon>
        <taxon>Pseudomonadati</taxon>
        <taxon>Campylobacterota</taxon>
        <taxon>Epsilonproteobacteria</taxon>
        <taxon>Campylobacterales</taxon>
        <taxon>Campylobacteraceae</taxon>
        <taxon>Campylobacter</taxon>
    </lineage>
</organism>
<feature type="chain" id="PRO_1000072360" description="Nucleoside diphosphate kinase">
    <location>
        <begin position="1"/>
        <end position="137"/>
    </location>
</feature>
<feature type="active site" description="Pros-phosphohistidine intermediate" evidence="1">
    <location>
        <position position="115"/>
    </location>
</feature>
<feature type="binding site" evidence="1">
    <location>
        <position position="9"/>
    </location>
    <ligand>
        <name>ATP</name>
        <dbReference type="ChEBI" id="CHEBI:30616"/>
    </ligand>
</feature>
<feature type="binding site" evidence="1">
    <location>
        <position position="57"/>
    </location>
    <ligand>
        <name>ATP</name>
        <dbReference type="ChEBI" id="CHEBI:30616"/>
    </ligand>
</feature>
<feature type="binding site" evidence="1">
    <location>
        <position position="85"/>
    </location>
    <ligand>
        <name>ATP</name>
        <dbReference type="ChEBI" id="CHEBI:30616"/>
    </ligand>
</feature>
<feature type="binding site" evidence="1">
    <location>
        <position position="91"/>
    </location>
    <ligand>
        <name>ATP</name>
        <dbReference type="ChEBI" id="CHEBI:30616"/>
    </ligand>
</feature>
<feature type="binding site" evidence="1">
    <location>
        <position position="102"/>
    </location>
    <ligand>
        <name>ATP</name>
        <dbReference type="ChEBI" id="CHEBI:30616"/>
    </ligand>
</feature>
<feature type="binding site" evidence="1">
    <location>
        <position position="112"/>
    </location>
    <ligand>
        <name>ATP</name>
        <dbReference type="ChEBI" id="CHEBI:30616"/>
    </ligand>
</feature>
<keyword id="KW-0067">ATP-binding</keyword>
<keyword id="KW-0963">Cytoplasm</keyword>
<keyword id="KW-0418">Kinase</keyword>
<keyword id="KW-0460">Magnesium</keyword>
<keyword id="KW-0479">Metal-binding</keyword>
<keyword id="KW-0546">Nucleotide metabolism</keyword>
<keyword id="KW-0547">Nucleotide-binding</keyword>
<keyword id="KW-0597">Phosphoprotein</keyword>
<keyword id="KW-0808">Transferase</keyword>
<reference key="1">
    <citation type="journal article" date="2007" name="J. Bacteriol.">
        <title>The complete genome sequence of Campylobacter jejuni strain 81116 (NCTC11828).</title>
        <authorList>
            <person name="Pearson B.M."/>
            <person name="Gaskin D.J.H."/>
            <person name="Segers R.P.A.M."/>
            <person name="Wells J.M."/>
            <person name="Nuijten P.J.M."/>
            <person name="van Vliet A.H.M."/>
        </authorList>
    </citation>
    <scope>NUCLEOTIDE SEQUENCE [LARGE SCALE GENOMIC DNA]</scope>
    <source>
        <strain>81116 / NCTC 11828</strain>
    </source>
</reference>
<proteinExistence type="inferred from homology"/>
<gene>
    <name evidence="1" type="primary">ndk</name>
    <name type="ordered locus">C8J_0309</name>
</gene>
<comment type="function">
    <text evidence="1">Major role in the synthesis of nucleoside triphosphates other than ATP. The ATP gamma phosphate is transferred to the NDP beta phosphate via a ping-pong mechanism, using a phosphorylated active-site intermediate.</text>
</comment>
<comment type="catalytic activity">
    <reaction evidence="1">
        <text>a 2'-deoxyribonucleoside 5'-diphosphate + ATP = a 2'-deoxyribonucleoside 5'-triphosphate + ADP</text>
        <dbReference type="Rhea" id="RHEA:44640"/>
        <dbReference type="ChEBI" id="CHEBI:30616"/>
        <dbReference type="ChEBI" id="CHEBI:61560"/>
        <dbReference type="ChEBI" id="CHEBI:73316"/>
        <dbReference type="ChEBI" id="CHEBI:456216"/>
        <dbReference type="EC" id="2.7.4.6"/>
    </reaction>
</comment>
<comment type="catalytic activity">
    <reaction evidence="1">
        <text>a ribonucleoside 5'-diphosphate + ATP = a ribonucleoside 5'-triphosphate + ADP</text>
        <dbReference type="Rhea" id="RHEA:18113"/>
        <dbReference type="ChEBI" id="CHEBI:30616"/>
        <dbReference type="ChEBI" id="CHEBI:57930"/>
        <dbReference type="ChEBI" id="CHEBI:61557"/>
        <dbReference type="ChEBI" id="CHEBI:456216"/>
        <dbReference type="EC" id="2.7.4.6"/>
    </reaction>
</comment>
<comment type="cofactor">
    <cofactor evidence="1">
        <name>Mg(2+)</name>
        <dbReference type="ChEBI" id="CHEBI:18420"/>
    </cofactor>
</comment>
<comment type="subunit">
    <text evidence="1">Homotetramer.</text>
</comment>
<comment type="subcellular location">
    <subcellularLocation>
        <location evidence="1">Cytoplasm</location>
    </subcellularLocation>
</comment>
<comment type="similarity">
    <text evidence="1">Belongs to the NDK family.</text>
</comment>
<name>NDK_CAMJ8</name>
<dbReference type="EC" id="2.7.4.6" evidence="1"/>
<dbReference type="EMBL" id="CP000814">
    <property type="protein sequence ID" value="ABV51908.1"/>
    <property type="molecule type" value="Genomic_DNA"/>
</dbReference>
<dbReference type="RefSeq" id="WP_002854376.1">
    <property type="nucleotide sequence ID" value="NC_009839.1"/>
</dbReference>
<dbReference type="SMR" id="A8FKC1"/>
<dbReference type="KEGG" id="cju:C8J_0309"/>
<dbReference type="HOGENOM" id="CLU_060216_8_1_7"/>
<dbReference type="GO" id="GO:0005737">
    <property type="term" value="C:cytoplasm"/>
    <property type="evidence" value="ECO:0007669"/>
    <property type="project" value="UniProtKB-SubCell"/>
</dbReference>
<dbReference type="GO" id="GO:0005524">
    <property type="term" value="F:ATP binding"/>
    <property type="evidence" value="ECO:0007669"/>
    <property type="project" value="UniProtKB-UniRule"/>
</dbReference>
<dbReference type="GO" id="GO:0046872">
    <property type="term" value="F:metal ion binding"/>
    <property type="evidence" value="ECO:0007669"/>
    <property type="project" value="UniProtKB-KW"/>
</dbReference>
<dbReference type="GO" id="GO:0004550">
    <property type="term" value="F:nucleoside diphosphate kinase activity"/>
    <property type="evidence" value="ECO:0007669"/>
    <property type="project" value="UniProtKB-UniRule"/>
</dbReference>
<dbReference type="GO" id="GO:0006241">
    <property type="term" value="P:CTP biosynthetic process"/>
    <property type="evidence" value="ECO:0007669"/>
    <property type="project" value="UniProtKB-UniRule"/>
</dbReference>
<dbReference type="GO" id="GO:0006183">
    <property type="term" value="P:GTP biosynthetic process"/>
    <property type="evidence" value="ECO:0007669"/>
    <property type="project" value="UniProtKB-UniRule"/>
</dbReference>
<dbReference type="GO" id="GO:0006228">
    <property type="term" value="P:UTP biosynthetic process"/>
    <property type="evidence" value="ECO:0007669"/>
    <property type="project" value="UniProtKB-UniRule"/>
</dbReference>
<dbReference type="CDD" id="cd04413">
    <property type="entry name" value="NDPk_I"/>
    <property type="match status" value="1"/>
</dbReference>
<dbReference type="FunFam" id="3.30.70.141:FF:000001">
    <property type="entry name" value="Nucleoside diphosphate kinase"/>
    <property type="match status" value="1"/>
</dbReference>
<dbReference type="Gene3D" id="3.30.70.141">
    <property type="entry name" value="Nucleoside diphosphate kinase-like domain"/>
    <property type="match status" value="1"/>
</dbReference>
<dbReference type="HAMAP" id="MF_00451">
    <property type="entry name" value="NDP_kinase"/>
    <property type="match status" value="1"/>
</dbReference>
<dbReference type="InterPro" id="IPR034907">
    <property type="entry name" value="NDK-like_dom"/>
</dbReference>
<dbReference type="InterPro" id="IPR036850">
    <property type="entry name" value="NDK-like_dom_sf"/>
</dbReference>
<dbReference type="InterPro" id="IPR001564">
    <property type="entry name" value="Nucleoside_diP_kinase"/>
</dbReference>
<dbReference type="InterPro" id="IPR023005">
    <property type="entry name" value="Nucleoside_diP_kinase_AS"/>
</dbReference>
<dbReference type="NCBIfam" id="NF001908">
    <property type="entry name" value="PRK00668.1"/>
    <property type="match status" value="1"/>
</dbReference>
<dbReference type="PANTHER" id="PTHR46161">
    <property type="entry name" value="NUCLEOSIDE DIPHOSPHATE KINASE"/>
    <property type="match status" value="1"/>
</dbReference>
<dbReference type="PANTHER" id="PTHR46161:SF3">
    <property type="entry name" value="NUCLEOSIDE DIPHOSPHATE KINASE DDB_G0292928-RELATED"/>
    <property type="match status" value="1"/>
</dbReference>
<dbReference type="Pfam" id="PF00334">
    <property type="entry name" value="NDK"/>
    <property type="match status" value="1"/>
</dbReference>
<dbReference type="PRINTS" id="PR01243">
    <property type="entry name" value="NUCDPKINASE"/>
</dbReference>
<dbReference type="SMART" id="SM00562">
    <property type="entry name" value="NDK"/>
    <property type="match status" value="1"/>
</dbReference>
<dbReference type="SUPFAM" id="SSF54919">
    <property type="entry name" value="Nucleoside diphosphate kinase, NDK"/>
    <property type="match status" value="1"/>
</dbReference>
<dbReference type="PROSITE" id="PS00469">
    <property type="entry name" value="NDPK"/>
    <property type="match status" value="1"/>
</dbReference>
<dbReference type="PROSITE" id="PS51374">
    <property type="entry name" value="NDPK_LIKE"/>
    <property type="match status" value="1"/>
</dbReference>
<protein>
    <recommendedName>
        <fullName evidence="1">Nucleoside diphosphate kinase</fullName>
        <shortName evidence="1">NDK</shortName>
        <shortName evidence="1">NDP kinase</shortName>
        <ecNumber evidence="1">2.7.4.6</ecNumber>
    </recommendedName>
    <alternativeName>
        <fullName evidence="1">Nucleoside-2-P kinase</fullName>
    </alternativeName>
</protein>